<protein>
    <recommendedName>
        <fullName evidence="1">Histone acetyltransferase</fullName>
        <shortName evidence="1">HAT</shortName>
        <ecNumber evidence="1">2.3.1.48</ecNumber>
    </recommendedName>
</protein>
<proteinExistence type="inferred from homology"/>
<dbReference type="EC" id="2.3.1.48" evidence="1"/>
<dbReference type="EMBL" id="AE000516">
    <property type="protein sequence ID" value="AAK47871.1"/>
    <property type="molecule type" value="Genomic_DNA"/>
</dbReference>
<dbReference type="RefSeq" id="WP_003900685.1">
    <property type="nucleotide sequence ID" value="NZ_KK341227.1"/>
</dbReference>
<dbReference type="KEGG" id="mtc:MT3532.1"/>
<dbReference type="HOGENOM" id="CLU_2650630_0_0_11"/>
<dbReference type="Proteomes" id="UP000001020">
    <property type="component" value="Chromosome"/>
</dbReference>
<dbReference type="GO" id="GO:0005576">
    <property type="term" value="C:extracellular region"/>
    <property type="evidence" value="ECO:0007669"/>
    <property type="project" value="UniProtKB-SubCell"/>
</dbReference>
<dbReference type="GO" id="GO:0030430">
    <property type="term" value="C:host cell cytoplasm"/>
    <property type="evidence" value="ECO:0007669"/>
    <property type="project" value="UniProtKB-SubCell"/>
</dbReference>
<dbReference type="GO" id="GO:0042025">
    <property type="term" value="C:host cell nucleus"/>
    <property type="evidence" value="ECO:0007669"/>
    <property type="project" value="UniProtKB-SubCell"/>
</dbReference>
<dbReference type="GO" id="GO:0004402">
    <property type="term" value="F:histone acetyltransferase activity"/>
    <property type="evidence" value="ECO:0007669"/>
    <property type="project" value="UniProtKB-EC"/>
</dbReference>
<evidence type="ECO:0000250" key="1">
    <source>
        <dbReference type="UniProtKB" id="P9WKY5"/>
    </source>
</evidence>
<name>HAT_MYCTO</name>
<sequence>MSFGFPTFSQNRFTEQYSGLCPIAPGRGAGLQPCRRDCPVARWLVADHPVFGSDCRCRMMVGVNRVRIGRHELTGA</sequence>
<feature type="chain" id="PRO_0000427573" description="Histone acetyltransferase">
    <location>
        <begin position="1"/>
        <end position="76"/>
    </location>
</feature>
<reference key="1">
    <citation type="journal article" date="2002" name="J. Bacteriol.">
        <title>Whole-genome comparison of Mycobacterium tuberculosis clinical and laboratory strains.</title>
        <authorList>
            <person name="Fleischmann R.D."/>
            <person name="Alland D."/>
            <person name="Eisen J.A."/>
            <person name="Carpenter L."/>
            <person name="White O."/>
            <person name="Peterson J.D."/>
            <person name="DeBoy R.T."/>
            <person name="Dodson R.J."/>
            <person name="Gwinn M.L."/>
            <person name="Haft D.H."/>
            <person name="Hickey E.K."/>
            <person name="Kolonay J.F."/>
            <person name="Nelson W.C."/>
            <person name="Umayam L.A."/>
            <person name="Ermolaeva M.D."/>
            <person name="Salzberg S.L."/>
            <person name="Delcher A."/>
            <person name="Utterback T.R."/>
            <person name="Weidman J.F."/>
            <person name="Khouri H.M."/>
            <person name="Gill J."/>
            <person name="Mikula A."/>
            <person name="Bishai W."/>
            <person name="Jacobs W.R. Jr."/>
            <person name="Venter J.C."/>
            <person name="Fraser C.M."/>
        </authorList>
    </citation>
    <scope>NUCLEOTIDE SEQUENCE [LARGE SCALE GENOMIC DNA]</scope>
    <source>
        <strain>CDC 1551 / Oshkosh</strain>
    </source>
</reference>
<accession>P9WKY4</accession>
<accession>Q8VJ11</accession>
<gene>
    <name type="ordered locus">MT3532.1</name>
</gene>
<keyword id="KW-0012">Acyltransferase</keyword>
<keyword id="KW-1035">Host cytoplasm</keyword>
<keyword id="KW-1048">Host nucleus</keyword>
<keyword id="KW-1185">Reference proteome</keyword>
<keyword id="KW-0964">Secreted</keyword>
<keyword id="KW-0808">Transferase</keyword>
<organism>
    <name type="scientific">Mycobacterium tuberculosis (strain CDC 1551 / Oshkosh)</name>
    <dbReference type="NCBI Taxonomy" id="83331"/>
    <lineage>
        <taxon>Bacteria</taxon>
        <taxon>Bacillati</taxon>
        <taxon>Actinomycetota</taxon>
        <taxon>Actinomycetes</taxon>
        <taxon>Mycobacteriales</taxon>
        <taxon>Mycobacteriaceae</taxon>
        <taxon>Mycobacterium</taxon>
        <taxon>Mycobacterium tuberculosis complex</taxon>
    </lineage>
</organism>
<comment type="function">
    <text evidence="1">Histone acetyltransferase, which by binding to the host chromatin, may manipulate the expression of host genes involved in anti-inflammatory responses to evade clearance and to survive in the intracellular milieu. Acetylates histone H3 at the 'Lys-9' and 'Lys-14' positions.</text>
</comment>
<comment type="catalytic activity">
    <reaction evidence="1">
        <text>L-lysyl-[protein] + acetyl-CoA = N(6)-acetyl-L-lysyl-[protein] + CoA + H(+)</text>
        <dbReference type="Rhea" id="RHEA:45948"/>
        <dbReference type="Rhea" id="RHEA-COMP:9752"/>
        <dbReference type="Rhea" id="RHEA-COMP:10731"/>
        <dbReference type="ChEBI" id="CHEBI:15378"/>
        <dbReference type="ChEBI" id="CHEBI:29969"/>
        <dbReference type="ChEBI" id="CHEBI:57287"/>
        <dbReference type="ChEBI" id="CHEBI:57288"/>
        <dbReference type="ChEBI" id="CHEBI:61930"/>
        <dbReference type="EC" id="2.3.1.48"/>
    </reaction>
</comment>
<comment type="activity regulation">
    <text evidence="1">Is completely inhibited by anacardic acid, an inhibitor of HAT activity.</text>
</comment>
<comment type="subunit">
    <text evidence="1">Physically interacts with histone H3 in infected macrophages.</text>
</comment>
<comment type="subcellular location">
    <subcellularLocation>
        <location evidence="1">Secreted</location>
    </subcellularLocation>
    <subcellularLocation>
        <location evidence="1">Host cytoplasm</location>
    </subcellularLocation>
    <subcellularLocation>
        <location evidence="1">Host nucleus</location>
    </subcellularLocation>
    <text evidence="1">Colocalizes with the chromatin in the nucleus of infected human macrophages.</text>
</comment>